<evidence type="ECO:0000255" key="1">
    <source>
        <dbReference type="HAMAP-Rule" id="MF_01850"/>
    </source>
</evidence>
<comment type="function">
    <text evidence="1">Catalyzes the ATP-dependent 2-thiolation of cytidine in position 32 of tRNA, to form 2-thiocytidine (s(2)C32). The sulfur atoms are provided by the cysteine/cysteine desulfurase (IscS) system.</text>
</comment>
<comment type="catalytic activity">
    <reaction evidence="1">
        <text>cytidine(32) in tRNA + S-sulfanyl-L-cysteinyl-[cysteine desulfurase] + AH2 + ATP = 2-thiocytidine(32) in tRNA + L-cysteinyl-[cysteine desulfurase] + A + AMP + diphosphate + H(+)</text>
        <dbReference type="Rhea" id="RHEA:57048"/>
        <dbReference type="Rhea" id="RHEA-COMP:10288"/>
        <dbReference type="Rhea" id="RHEA-COMP:12157"/>
        <dbReference type="Rhea" id="RHEA-COMP:12158"/>
        <dbReference type="Rhea" id="RHEA-COMP:14821"/>
        <dbReference type="ChEBI" id="CHEBI:13193"/>
        <dbReference type="ChEBI" id="CHEBI:15378"/>
        <dbReference type="ChEBI" id="CHEBI:17499"/>
        <dbReference type="ChEBI" id="CHEBI:29950"/>
        <dbReference type="ChEBI" id="CHEBI:30616"/>
        <dbReference type="ChEBI" id="CHEBI:33019"/>
        <dbReference type="ChEBI" id="CHEBI:61963"/>
        <dbReference type="ChEBI" id="CHEBI:82748"/>
        <dbReference type="ChEBI" id="CHEBI:141453"/>
        <dbReference type="ChEBI" id="CHEBI:456215"/>
    </reaction>
    <physiologicalReaction direction="left-to-right" evidence="1">
        <dbReference type="Rhea" id="RHEA:57049"/>
    </physiologicalReaction>
</comment>
<comment type="cofactor">
    <cofactor evidence="1">
        <name>Mg(2+)</name>
        <dbReference type="ChEBI" id="CHEBI:18420"/>
    </cofactor>
</comment>
<comment type="cofactor">
    <cofactor evidence="1">
        <name>[4Fe-4S] cluster</name>
        <dbReference type="ChEBI" id="CHEBI:49883"/>
    </cofactor>
    <text evidence="1">Binds 1 [4Fe-4S] cluster per subunit. The cluster is chelated by three Cys residues, the fourth Fe has a free coordination site that may bind a sulfur atom transferred from the persulfide of IscS.</text>
</comment>
<comment type="pathway">
    <text evidence="1">tRNA modification.</text>
</comment>
<comment type="subunit">
    <text evidence="1">Homodimer.</text>
</comment>
<comment type="subcellular location">
    <subcellularLocation>
        <location evidence="1">Cytoplasm</location>
    </subcellularLocation>
</comment>
<comment type="miscellaneous">
    <text evidence="1">The thiolation reaction likely consists of two steps: a first activation step by ATP to form an adenylated intermediate of the target base of tRNA, and a second nucleophilic substitution step of the sulfur (S) atom supplied by the hydrosulfide attached to the Fe-S cluster.</text>
</comment>
<comment type="similarity">
    <text evidence="1">Belongs to the TtcA family.</text>
</comment>
<feature type="chain" id="PRO_1000188628" description="tRNA-cytidine(32) 2-sulfurtransferase">
    <location>
        <begin position="1"/>
        <end position="293"/>
    </location>
</feature>
<feature type="short sequence motif" description="PP-loop motif" evidence="1">
    <location>
        <begin position="62"/>
        <end position="67"/>
    </location>
</feature>
<feature type="binding site" evidence="1">
    <location>
        <position position="137"/>
    </location>
    <ligand>
        <name>[4Fe-4S] cluster</name>
        <dbReference type="ChEBI" id="CHEBI:49883"/>
    </ligand>
</feature>
<feature type="binding site" evidence="1">
    <location>
        <position position="140"/>
    </location>
    <ligand>
        <name>[4Fe-4S] cluster</name>
        <dbReference type="ChEBI" id="CHEBI:49883"/>
    </ligand>
</feature>
<feature type="binding site" evidence="1">
    <location>
        <position position="228"/>
    </location>
    <ligand>
        <name>[4Fe-4S] cluster</name>
        <dbReference type="ChEBI" id="CHEBI:49883"/>
    </ligand>
</feature>
<keyword id="KW-0004">4Fe-4S</keyword>
<keyword id="KW-0067">ATP-binding</keyword>
<keyword id="KW-0963">Cytoplasm</keyword>
<keyword id="KW-0408">Iron</keyword>
<keyword id="KW-0411">Iron-sulfur</keyword>
<keyword id="KW-0460">Magnesium</keyword>
<keyword id="KW-0479">Metal-binding</keyword>
<keyword id="KW-0547">Nucleotide-binding</keyword>
<keyword id="KW-0694">RNA-binding</keyword>
<keyword id="KW-0808">Transferase</keyword>
<keyword id="KW-0819">tRNA processing</keyword>
<keyword id="KW-0820">tRNA-binding</keyword>
<organism>
    <name type="scientific">Brucella melitensis biotype 2 (strain ATCC 23457)</name>
    <dbReference type="NCBI Taxonomy" id="546272"/>
    <lineage>
        <taxon>Bacteria</taxon>
        <taxon>Pseudomonadati</taxon>
        <taxon>Pseudomonadota</taxon>
        <taxon>Alphaproteobacteria</taxon>
        <taxon>Hyphomicrobiales</taxon>
        <taxon>Brucellaceae</taxon>
        <taxon>Brucella/Ochrobactrum group</taxon>
        <taxon>Brucella</taxon>
    </lineage>
</organism>
<reference key="1">
    <citation type="submission" date="2009-03" db="EMBL/GenBank/DDBJ databases">
        <title>Brucella melitensis ATCC 23457 whole genome shotgun sequencing project.</title>
        <authorList>
            <person name="Setubal J.C."/>
            <person name="Boyle S."/>
            <person name="Crasta O.R."/>
            <person name="Gillespie J.J."/>
            <person name="Kenyon R.W."/>
            <person name="Lu J."/>
            <person name="Mane S."/>
            <person name="Nagrani S."/>
            <person name="Shallom J.M."/>
            <person name="Shallom S."/>
            <person name="Shukla M."/>
            <person name="Snyder E.E."/>
            <person name="Sobral B.W."/>
            <person name="Wattam A.R."/>
            <person name="Will R."/>
            <person name="Williams K."/>
            <person name="Yoo H."/>
            <person name="Munk C."/>
            <person name="Tapia R."/>
            <person name="Han C."/>
            <person name="Detter J.C."/>
            <person name="Bruce D."/>
            <person name="Brettin T.S."/>
        </authorList>
    </citation>
    <scope>NUCLEOTIDE SEQUENCE [LARGE SCALE GENOMIC DNA]</scope>
    <source>
        <strain>ATCC 23457</strain>
    </source>
</reference>
<accession>C0RIG5</accession>
<protein>
    <recommendedName>
        <fullName evidence="1">tRNA-cytidine(32) 2-sulfurtransferase</fullName>
        <ecNumber evidence="1">2.8.1.-</ecNumber>
    </recommendedName>
    <alternativeName>
        <fullName evidence="1">Two-thiocytidine biosynthesis protein A</fullName>
    </alternativeName>
    <alternativeName>
        <fullName evidence="1">tRNA 2-thiocytidine biosynthesis protein TtcA</fullName>
    </alternativeName>
</protein>
<sequence>MNAFDADITEHADSSGCHPLFRDVPATVEFNKLRKRLLRLTRQAIEDFAMVKPGDRWMVCLSGGKDSYGLLALLLDLKWRGLLPVELLAVNLDQGQPNFPKHILPDFLTRYGIEHRIEYQDTYSIVTDKLPETSTYCSLCSRLRRGNLYRIAREEGCSAIVLGHHREDILETFFMNLFHGGRLAAMPPKLLNDEGDLMVFRPLAYAAEDDLEKFANAMQFPIIPCDLCGSQDGLQRNAMKAMLIDIEKRMPGRKDTMIRALTNVRPSHLLDRKLFDFAGLMANGEKGSDDALW</sequence>
<proteinExistence type="inferred from homology"/>
<name>TTCA_BRUMB</name>
<dbReference type="EC" id="2.8.1.-" evidence="1"/>
<dbReference type="EMBL" id="CP001488">
    <property type="protein sequence ID" value="ACO00623.1"/>
    <property type="molecule type" value="Genomic_DNA"/>
</dbReference>
<dbReference type="RefSeq" id="WP_002969416.1">
    <property type="nucleotide sequence ID" value="NC_012441.1"/>
</dbReference>
<dbReference type="SMR" id="C0RIG5"/>
<dbReference type="GeneID" id="93016786"/>
<dbReference type="KEGG" id="bmi:BMEA_A0870"/>
<dbReference type="HOGENOM" id="CLU_026481_0_0_5"/>
<dbReference type="Proteomes" id="UP000001748">
    <property type="component" value="Chromosome I"/>
</dbReference>
<dbReference type="GO" id="GO:0005737">
    <property type="term" value="C:cytoplasm"/>
    <property type="evidence" value="ECO:0007669"/>
    <property type="project" value="UniProtKB-SubCell"/>
</dbReference>
<dbReference type="GO" id="GO:0051539">
    <property type="term" value="F:4 iron, 4 sulfur cluster binding"/>
    <property type="evidence" value="ECO:0007669"/>
    <property type="project" value="UniProtKB-UniRule"/>
</dbReference>
<dbReference type="GO" id="GO:0005524">
    <property type="term" value="F:ATP binding"/>
    <property type="evidence" value="ECO:0007669"/>
    <property type="project" value="UniProtKB-UniRule"/>
</dbReference>
<dbReference type="GO" id="GO:0000287">
    <property type="term" value="F:magnesium ion binding"/>
    <property type="evidence" value="ECO:0007669"/>
    <property type="project" value="UniProtKB-UniRule"/>
</dbReference>
<dbReference type="GO" id="GO:0016783">
    <property type="term" value="F:sulfurtransferase activity"/>
    <property type="evidence" value="ECO:0007669"/>
    <property type="project" value="UniProtKB-UniRule"/>
</dbReference>
<dbReference type="GO" id="GO:0000049">
    <property type="term" value="F:tRNA binding"/>
    <property type="evidence" value="ECO:0007669"/>
    <property type="project" value="UniProtKB-KW"/>
</dbReference>
<dbReference type="GO" id="GO:0034227">
    <property type="term" value="P:tRNA thio-modification"/>
    <property type="evidence" value="ECO:0007669"/>
    <property type="project" value="UniProtKB-UniRule"/>
</dbReference>
<dbReference type="CDD" id="cd24138">
    <property type="entry name" value="TtcA-like"/>
    <property type="match status" value="1"/>
</dbReference>
<dbReference type="Gene3D" id="3.40.50.620">
    <property type="entry name" value="HUPs"/>
    <property type="match status" value="1"/>
</dbReference>
<dbReference type="HAMAP" id="MF_01850">
    <property type="entry name" value="TtcA"/>
    <property type="match status" value="1"/>
</dbReference>
<dbReference type="InterPro" id="IPR014729">
    <property type="entry name" value="Rossmann-like_a/b/a_fold"/>
</dbReference>
<dbReference type="InterPro" id="IPR011063">
    <property type="entry name" value="TilS/TtcA_N"/>
</dbReference>
<dbReference type="InterPro" id="IPR012089">
    <property type="entry name" value="tRNA_Cyd_32_2_STrfase"/>
</dbReference>
<dbReference type="InterPro" id="IPR035107">
    <property type="entry name" value="tRNA_thiolation_TtcA_Ctu1"/>
</dbReference>
<dbReference type="NCBIfam" id="NF007972">
    <property type="entry name" value="PRK10696.1"/>
    <property type="match status" value="1"/>
</dbReference>
<dbReference type="PANTHER" id="PTHR43686:SF1">
    <property type="entry name" value="AMINOTRAN_5 DOMAIN-CONTAINING PROTEIN"/>
    <property type="match status" value="1"/>
</dbReference>
<dbReference type="PANTHER" id="PTHR43686">
    <property type="entry name" value="SULFURTRANSFERASE-RELATED"/>
    <property type="match status" value="1"/>
</dbReference>
<dbReference type="Pfam" id="PF01171">
    <property type="entry name" value="ATP_bind_3"/>
    <property type="match status" value="1"/>
</dbReference>
<dbReference type="PIRSF" id="PIRSF004976">
    <property type="entry name" value="ATPase_YdaO"/>
    <property type="match status" value="1"/>
</dbReference>
<dbReference type="SUPFAM" id="SSF52402">
    <property type="entry name" value="Adenine nucleotide alpha hydrolases-like"/>
    <property type="match status" value="1"/>
</dbReference>
<gene>
    <name evidence="1" type="primary">ttcA</name>
    <name type="ordered locus">BMEA_A0870</name>
</gene>